<sequence>MKATLAAPSSLTSLPYRTNSSFGSKSSLLFRSPSSSSSVSMTTTRGNVAVAAAATSTEALRKGIAEFYNETSGLWEEIWGDHMHHGFYDPDSSVQLSDSGHKEAQIRMIEESLRFAGVTDEEEEKKIKKVVDVGCGIGGSSRYLASKFGAECIGITLSPVQAKRANDLAAAQSLAHKASFQVADALDQPFEDGKFDLVWSMESGEHMPDKAKFVKELVRVAAPGGRIIIVTWCHRNLSAGEEALQPWEQNILDKICKTFYLPAWCSTDDYVNLLQSHSLQDIKCADWSENVAPFWPAVIRTALTWKGLVSLLRSGMKSIKGALTMPLMIEGYKKGVIKFGIITCQKPL</sequence>
<dbReference type="EC" id="2.1.1.95" evidence="5"/>
<dbReference type="EMBL" id="AF104220">
    <property type="protein sequence ID" value="AAD02882.1"/>
    <property type="molecule type" value="mRNA"/>
</dbReference>
<dbReference type="EMBL" id="AC006193">
    <property type="protein sequence ID" value="AAD38271.2"/>
    <property type="molecule type" value="Genomic_DNA"/>
</dbReference>
<dbReference type="EMBL" id="CP002684">
    <property type="protein sequence ID" value="AEE34310.1"/>
    <property type="molecule type" value="Genomic_DNA"/>
</dbReference>
<dbReference type="EMBL" id="AY049258">
    <property type="protein sequence ID" value="AAK83600.1"/>
    <property type="molecule type" value="mRNA"/>
</dbReference>
<dbReference type="EMBL" id="AY090280">
    <property type="protein sequence ID" value="AAL90941.1"/>
    <property type="molecule type" value="mRNA"/>
</dbReference>
<dbReference type="EMBL" id="AY087138">
    <property type="protein sequence ID" value="AAM64696.1"/>
    <property type="molecule type" value="mRNA"/>
</dbReference>
<dbReference type="PIR" id="C96673">
    <property type="entry name" value="C96673"/>
</dbReference>
<dbReference type="RefSeq" id="NP_176677.1">
    <property type="nucleotide sequence ID" value="NM_105171.3"/>
</dbReference>
<dbReference type="SMR" id="Q9ZSK1"/>
<dbReference type="FunCoup" id="Q9ZSK1">
    <property type="interactions" value="258"/>
</dbReference>
<dbReference type="STRING" id="3702.Q9ZSK1"/>
<dbReference type="SwissLipids" id="SLP:000001490"/>
<dbReference type="iPTMnet" id="Q9ZSK1"/>
<dbReference type="PaxDb" id="3702-AT1G64970.1"/>
<dbReference type="ProteomicsDB" id="248499"/>
<dbReference type="EnsemblPlants" id="AT1G64970.1">
    <property type="protein sequence ID" value="AT1G64970.1"/>
    <property type="gene ID" value="AT1G64970"/>
</dbReference>
<dbReference type="GeneID" id="842805"/>
<dbReference type="Gramene" id="AT1G64970.1">
    <property type="protein sequence ID" value="AT1G64970.1"/>
    <property type="gene ID" value="AT1G64970"/>
</dbReference>
<dbReference type="KEGG" id="ath:AT1G64970"/>
<dbReference type="Araport" id="AT1G64970"/>
<dbReference type="TAIR" id="AT1G64970">
    <property type="gene designation" value="G-TMT"/>
</dbReference>
<dbReference type="eggNOG" id="KOG1269">
    <property type="taxonomic scope" value="Eukaryota"/>
</dbReference>
<dbReference type="HOGENOM" id="CLU_039068_0_0_1"/>
<dbReference type="InParanoid" id="Q9ZSK1"/>
<dbReference type="OMA" id="YCLPYVI"/>
<dbReference type="OrthoDB" id="8300214at2759"/>
<dbReference type="PhylomeDB" id="Q9ZSK1"/>
<dbReference type="BioCyc" id="ARA:AT1G64970-MONOMER"/>
<dbReference type="BRENDA" id="2.1.1.95">
    <property type="organism ID" value="399"/>
</dbReference>
<dbReference type="UniPathway" id="UPA00160"/>
<dbReference type="PRO" id="PR:Q9ZSK1"/>
<dbReference type="Proteomes" id="UP000006548">
    <property type="component" value="Chromosome 1"/>
</dbReference>
<dbReference type="ExpressionAtlas" id="Q9ZSK1">
    <property type="expression patterns" value="baseline and differential"/>
</dbReference>
<dbReference type="GO" id="GO:0009507">
    <property type="term" value="C:chloroplast"/>
    <property type="evidence" value="ECO:0000250"/>
    <property type="project" value="TAIR"/>
</dbReference>
<dbReference type="GO" id="GO:0005634">
    <property type="term" value="C:nucleus"/>
    <property type="evidence" value="ECO:0007005"/>
    <property type="project" value="TAIR"/>
</dbReference>
<dbReference type="GO" id="GO:0008757">
    <property type="term" value="F:S-adenosylmethionine-dependent methyltransferase activity"/>
    <property type="evidence" value="ECO:0007669"/>
    <property type="project" value="InterPro"/>
</dbReference>
<dbReference type="GO" id="GO:0050342">
    <property type="term" value="F:tocopherol C-methyltransferase activity"/>
    <property type="evidence" value="ECO:0000314"/>
    <property type="project" value="TAIR"/>
</dbReference>
<dbReference type="GO" id="GO:0032259">
    <property type="term" value="P:methylation"/>
    <property type="evidence" value="ECO:0007669"/>
    <property type="project" value="UniProtKB-KW"/>
</dbReference>
<dbReference type="GO" id="GO:0010189">
    <property type="term" value="P:vitamin E biosynthetic process"/>
    <property type="evidence" value="ECO:0000315"/>
    <property type="project" value="TAIR"/>
</dbReference>
<dbReference type="CDD" id="cd02440">
    <property type="entry name" value="AdoMet_MTases"/>
    <property type="match status" value="1"/>
</dbReference>
<dbReference type="FunFam" id="3.40.50.150:FF:000376">
    <property type="entry name" value="Gamma-tocopherol methyltransferase"/>
    <property type="match status" value="1"/>
</dbReference>
<dbReference type="Gene3D" id="3.40.50.150">
    <property type="entry name" value="Vaccinia Virus protein VP39"/>
    <property type="match status" value="1"/>
</dbReference>
<dbReference type="InterPro" id="IPR013216">
    <property type="entry name" value="Methyltransf_11"/>
</dbReference>
<dbReference type="InterPro" id="IPR025774">
    <property type="entry name" value="MTs_g-TMT"/>
</dbReference>
<dbReference type="InterPro" id="IPR029063">
    <property type="entry name" value="SAM-dependent_MTases_sf"/>
</dbReference>
<dbReference type="PANTHER" id="PTHR43591:SF81">
    <property type="entry name" value="MAGNESIUM PROTOPORPHYRIN IX METHYLTRANSFERASE, CHLOROPLASTIC-RELATED"/>
    <property type="match status" value="1"/>
</dbReference>
<dbReference type="PANTHER" id="PTHR43591">
    <property type="entry name" value="METHYLTRANSFERASE"/>
    <property type="match status" value="1"/>
</dbReference>
<dbReference type="Pfam" id="PF08241">
    <property type="entry name" value="Methyltransf_11"/>
    <property type="match status" value="1"/>
</dbReference>
<dbReference type="SUPFAM" id="SSF53335">
    <property type="entry name" value="S-adenosyl-L-methionine-dependent methyltransferases"/>
    <property type="match status" value="1"/>
</dbReference>
<dbReference type="PROSITE" id="PS51581">
    <property type="entry name" value="SAM_GTMT"/>
    <property type="match status" value="1"/>
</dbReference>
<gene>
    <name type="primary">VTE4</name>
    <name type="synonym">G-TMT</name>
    <name type="ordered locus">At1g64970</name>
    <name type="ORF">F13O11.27</name>
</gene>
<comment type="function">
    <text evidence="3 4 5">Involved in the synthesis of tocopherol (vitamin E). Methylates gamma- and delta-tocopherol to form beta- and alpha-tocopherol, respectively.</text>
</comment>
<comment type="catalytic activity">
    <reaction evidence="5">
        <text>gamma-tocopherol + S-adenosyl-L-methionine = (+)-alpha-tocopherol + S-adenosyl-L-homocysteine + H(+)</text>
        <dbReference type="Rhea" id="RHEA:24012"/>
        <dbReference type="ChEBI" id="CHEBI:15378"/>
        <dbReference type="ChEBI" id="CHEBI:18145"/>
        <dbReference type="ChEBI" id="CHEBI:18185"/>
        <dbReference type="ChEBI" id="CHEBI:57856"/>
        <dbReference type="ChEBI" id="CHEBI:59789"/>
        <dbReference type="EC" id="2.1.1.95"/>
    </reaction>
</comment>
<comment type="catalytic activity">
    <reaction evidence="5">
        <text>delta-tocotrienol + S-adenosyl-L-methionine = beta-tocotrienol + S-adenosyl-L-homocysteine + H(+)</text>
        <dbReference type="Rhea" id="RHEA:38091"/>
        <dbReference type="ChEBI" id="CHEBI:15378"/>
        <dbReference type="ChEBI" id="CHEBI:33275"/>
        <dbReference type="ChEBI" id="CHEBI:33276"/>
        <dbReference type="ChEBI" id="CHEBI:57856"/>
        <dbReference type="ChEBI" id="CHEBI:59789"/>
        <dbReference type="EC" id="2.1.1.95"/>
    </reaction>
</comment>
<comment type="catalytic activity">
    <reaction evidence="5">
        <text>gamma-tocotrienol + S-adenosyl-L-methionine = alpha-tocotrienol + S-adenosyl-L-homocysteine + H(+)</text>
        <dbReference type="Rhea" id="RHEA:38095"/>
        <dbReference type="ChEBI" id="CHEBI:15378"/>
        <dbReference type="ChEBI" id="CHEBI:33270"/>
        <dbReference type="ChEBI" id="CHEBI:33277"/>
        <dbReference type="ChEBI" id="CHEBI:57856"/>
        <dbReference type="ChEBI" id="CHEBI:59789"/>
        <dbReference type="EC" id="2.1.1.95"/>
    </reaction>
</comment>
<comment type="catalytic activity">
    <reaction evidence="5">
        <text>delta-tocopherol + S-adenosyl-L-methionine = beta-tocopherol + S-adenosyl-L-homocysteine + H(+)</text>
        <dbReference type="Rhea" id="RHEA:37991"/>
        <dbReference type="ChEBI" id="CHEBI:15378"/>
        <dbReference type="ChEBI" id="CHEBI:47771"/>
        <dbReference type="ChEBI" id="CHEBI:47772"/>
        <dbReference type="ChEBI" id="CHEBI:57856"/>
        <dbReference type="ChEBI" id="CHEBI:59789"/>
        <dbReference type="EC" id="2.1.1.95"/>
    </reaction>
</comment>
<comment type="pathway">
    <text>Cofactor biosynthesis; tocopherol biosynthesis.</text>
</comment>
<comment type="subcellular location">
    <subcellularLocation>
        <location evidence="1">Plastid</location>
        <location evidence="1">Chloroplast</location>
    </subcellularLocation>
</comment>
<comment type="disruption phenotype">
    <text evidence="4">Slight reduction of fresh weight in mature plants. Leaves with high levels of gamma-tocopherol and absence of alpha-tocopherol.</text>
</comment>
<comment type="miscellaneous">
    <text>Seeds overexpressing VTE4 show increased levels of alpha-tocopherol.</text>
</comment>
<comment type="similarity">
    <text evidence="2">Belongs to the class I-like SAM-binding methyltransferase superfamily. gTMT family.</text>
</comment>
<name>GTOMC_ARATH</name>
<protein>
    <recommendedName>
        <fullName>Tocopherol O-methyltransferase, chloroplastic</fullName>
        <ecNumber evidence="5">2.1.1.95</ecNumber>
    </recommendedName>
    <alternativeName>
        <fullName>Gamma-tocopherol methyltransferase</fullName>
    </alternativeName>
    <alternativeName>
        <fullName>Vitamin E pathway gene 4 protein</fullName>
        <shortName>AtVTE4</shortName>
    </alternativeName>
</protein>
<reference key="1">
    <citation type="journal article" date="1998" name="Science">
        <title>Elevating the vitamin E content of plants through metabolic engineering.</title>
        <authorList>
            <person name="Shintani D."/>
            <person name="DellaPenna D."/>
        </authorList>
    </citation>
    <scope>NUCLEOTIDE SEQUENCE [MRNA]</scope>
    <scope>FUNCTION</scope>
    <scope>CATALYTIC ACTIVITY</scope>
</reference>
<reference key="2">
    <citation type="journal article" date="2000" name="Nature">
        <title>Sequence and analysis of chromosome 1 of the plant Arabidopsis thaliana.</title>
        <authorList>
            <person name="Theologis A."/>
            <person name="Ecker J.R."/>
            <person name="Palm C.J."/>
            <person name="Federspiel N.A."/>
            <person name="Kaul S."/>
            <person name="White O."/>
            <person name="Alonso J."/>
            <person name="Altafi H."/>
            <person name="Araujo R."/>
            <person name="Bowman C.L."/>
            <person name="Brooks S.Y."/>
            <person name="Buehler E."/>
            <person name="Chan A."/>
            <person name="Chao Q."/>
            <person name="Chen H."/>
            <person name="Cheuk R.F."/>
            <person name="Chin C.W."/>
            <person name="Chung M.K."/>
            <person name="Conn L."/>
            <person name="Conway A.B."/>
            <person name="Conway A.R."/>
            <person name="Creasy T.H."/>
            <person name="Dewar K."/>
            <person name="Dunn P."/>
            <person name="Etgu P."/>
            <person name="Feldblyum T.V."/>
            <person name="Feng J.-D."/>
            <person name="Fong B."/>
            <person name="Fujii C.Y."/>
            <person name="Gill J.E."/>
            <person name="Goldsmith A.D."/>
            <person name="Haas B."/>
            <person name="Hansen N.F."/>
            <person name="Hughes B."/>
            <person name="Huizar L."/>
            <person name="Hunter J.L."/>
            <person name="Jenkins J."/>
            <person name="Johnson-Hopson C."/>
            <person name="Khan S."/>
            <person name="Khaykin E."/>
            <person name="Kim C.J."/>
            <person name="Koo H.L."/>
            <person name="Kremenetskaia I."/>
            <person name="Kurtz D.B."/>
            <person name="Kwan A."/>
            <person name="Lam B."/>
            <person name="Langin-Hooper S."/>
            <person name="Lee A."/>
            <person name="Lee J.M."/>
            <person name="Lenz C.A."/>
            <person name="Li J.H."/>
            <person name="Li Y.-P."/>
            <person name="Lin X."/>
            <person name="Liu S.X."/>
            <person name="Liu Z.A."/>
            <person name="Luros J.S."/>
            <person name="Maiti R."/>
            <person name="Marziali A."/>
            <person name="Militscher J."/>
            <person name="Miranda M."/>
            <person name="Nguyen M."/>
            <person name="Nierman W.C."/>
            <person name="Osborne B.I."/>
            <person name="Pai G."/>
            <person name="Peterson J."/>
            <person name="Pham P.K."/>
            <person name="Rizzo M."/>
            <person name="Rooney T."/>
            <person name="Rowley D."/>
            <person name="Sakano H."/>
            <person name="Salzberg S.L."/>
            <person name="Schwartz J.R."/>
            <person name="Shinn P."/>
            <person name="Southwick A.M."/>
            <person name="Sun H."/>
            <person name="Tallon L.J."/>
            <person name="Tambunga G."/>
            <person name="Toriumi M.J."/>
            <person name="Town C.D."/>
            <person name="Utterback T."/>
            <person name="Van Aken S."/>
            <person name="Vaysberg M."/>
            <person name="Vysotskaia V.S."/>
            <person name="Walker M."/>
            <person name="Wu D."/>
            <person name="Yu G."/>
            <person name="Fraser C.M."/>
            <person name="Venter J.C."/>
            <person name="Davis R.W."/>
        </authorList>
    </citation>
    <scope>NUCLEOTIDE SEQUENCE [LARGE SCALE GENOMIC DNA]</scope>
    <source>
        <strain>cv. Columbia</strain>
    </source>
</reference>
<reference key="3">
    <citation type="journal article" date="2017" name="Plant J.">
        <title>Araport11: a complete reannotation of the Arabidopsis thaliana reference genome.</title>
        <authorList>
            <person name="Cheng C.Y."/>
            <person name="Krishnakumar V."/>
            <person name="Chan A.P."/>
            <person name="Thibaud-Nissen F."/>
            <person name="Schobel S."/>
            <person name="Town C.D."/>
        </authorList>
    </citation>
    <scope>GENOME REANNOTATION</scope>
    <source>
        <strain>cv. Columbia</strain>
    </source>
</reference>
<reference key="4">
    <citation type="journal article" date="2003" name="Science">
        <title>Empirical analysis of transcriptional activity in the Arabidopsis genome.</title>
        <authorList>
            <person name="Yamada K."/>
            <person name="Lim J."/>
            <person name="Dale J.M."/>
            <person name="Chen H."/>
            <person name="Shinn P."/>
            <person name="Palm C.J."/>
            <person name="Southwick A.M."/>
            <person name="Wu H.C."/>
            <person name="Kim C.J."/>
            <person name="Nguyen M."/>
            <person name="Pham P.K."/>
            <person name="Cheuk R.F."/>
            <person name="Karlin-Newmann G."/>
            <person name="Liu S.X."/>
            <person name="Lam B."/>
            <person name="Sakano H."/>
            <person name="Wu T."/>
            <person name="Yu G."/>
            <person name="Miranda M."/>
            <person name="Quach H.L."/>
            <person name="Tripp M."/>
            <person name="Chang C.H."/>
            <person name="Lee J.M."/>
            <person name="Toriumi M.J."/>
            <person name="Chan M.M."/>
            <person name="Tang C.C."/>
            <person name="Onodera C.S."/>
            <person name="Deng J.M."/>
            <person name="Akiyama K."/>
            <person name="Ansari Y."/>
            <person name="Arakawa T."/>
            <person name="Banh J."/>
            <person name="Banno F."/>
            <person name="Bowser L."/>
            <person name="Brooks S.Y."/>
            <person name="Carninci P."/>
            <person name="Chao Q."/>
            <person name="Choy N."/>
            <person name="Enju A."/>
            <person name="Goldsmith A.D."/>
            <person name="Gurjal M."/>
            <person name="Hansen N.F."/>
            <person name="Hayashizaki Y."/>
            <person name="Johnson-Hopson C."/>
            <person name="Hsuan V.W."/>
            <person name="Iida K."/>
            <person name="Karnes M."/>
            <person name="Khan S."/>
            <person name="Koesema E."/>
            <person name="Ishida J."/>
            <person name="Jiang P.X."/>
            <person name="Jones T."/>
            <person name="Kawai J."/>
            <person name="Kamiya A."/>
            <person name="Meyers C."/>
            <person name="Nakajima M."/>
            <person name="Narusaka M."/>
            <person name="Seki M."/>
            <person name="Sakurai T."/>
            <person name="Satou M."/>
            <person name="Tamse R."/>
            <person name="Vaysberg M."/>
            <person name="Wallender E.K."/>
            <person name="Wong C."/>
            <person name="Yamamura Y."/>
            <person name="Yuan S."/>
            <person name="Shinozaki K."/>
            <person name="Davis R.W."/>
            <person name="Theologis A."/>
            <person name="Ecker J.R."/>
        </authorList>
    </citation>
    <scope>NUCLEOTIDE SEQUENCE [LARGE SCALE MRNA]</scope>
    <source>
        <strain>cv. Columbia</strain>
    </source>
</reference>
<reference key="5">
    <citation type="submission" date="2002-03" db="EMBL/GenBank/DDBJ databases">
        <title>Full-length cDNA from Arabidopsis thaliana.</title>
        <authorList>
            <person name="Brover V.V."/>
            <person name="Troukhan M.E."/>
            <person name="Alexandrov N.A."/>
            <person name="Lu Y.-P."/>
            <person name="Flavell R.B."/>
            <person name="Feldmann K.A."/>
        </authorList>
    </citation>
    <scope>NUCLEOTIDE SEQUENCE [LARGE SCALE MRNA]</scope>
</reference>
<reference key="6">
    <citation type="journal article" date="2003" name="Plant Mol. Biol.">
        <title>Characterization of an Arabidopsis mutant deficient in gamma-tocopherol methyltransferase.</title>
        <authorList>
            <person name="Bergmueller E."/>
            <person name="Porfirova S."/>
            <person name="Doermann P."/>
        </authorList>
    </citation>
    <scope>FUNCTION</scope>
    <scope>DISRUPTION PHENOTYPE</scope>
</reference>
<reference key="7">
    <citation type="journal article" date="2003" name="Plant Physiol.">
        <title>Homogentisate phytyltransferase activity is limiting for tocopherol biosynthesis in Arabidopsis.</title>
        <authorList>
            <person name="Collakova E."/>
            <person name="DellaPenna D."/>
        </authorList>
    </citation>
    <scope>FUNCTION</scope>
</reference>
<reference key="8">
    <citation type="journal article" date="2012" name="Mol. Cell. Proteomics">
        <title>Comparative large-scale characterisation of plant vs. mammal proteins reveals similar and idiosyncratic N-alpha acetylation features.</title>
        <authorList>
            <person name="Bienvenut W.V."/>
            <person name="Sumpton D."/>
            <person name="Martinez A."/>
            <person name="Lilla S."/>
            <person name="Espagne C."/>
            <person name="Meinnel T."/>
            <person name="Giglione C."/>
        </authorList>
    </citation>
    <scope>ACETYLATION [LARGE SCALE ANALYSIS] AT ALA-52</scope>
    <scope>CLEAVAGE OF TRANSIT PEPTIDE [LARGE SCALE ANALYSIS] AFTER ALA-51</scope>
    <scope>IDENTIFICATION BY MASS SPECTROMETRY [LARGE SCALE ANALYSIS]</scope>
</reference>
<feature type="transit peptide" description="Chloroplast" evidence="7">
    <location>
        <begin position="1"/>
        <end position="51"/>
    </location>
</feature>
<feature type="chain" id="PRO_0000018677" description="Tocopherol O-methyltransferase, chloroplastic">
    <location>
        <begin position="52"/>
        <end position="348"/>
    </location>
</feature>
<feature type="region of interest" description="SAM motif I" evidence="2">
    <location>
        <begin position="130"/>
        <end position="139"/>
    </location>
</feature>
<feature type="region of interest" description="SAM motif II" evidence="2">
    <location>
        <begin position="193"/>
        <end position="201"/>
    </location>
</feature>
<feature type="region of interest" description="SAM motif III" evidence="2">
    <location>
        <begin position="220"/>
        <end position="229"/>
    </location>
</feature>
<feature type="modified residue" description="N-acetylalanine" evidence="7">
    <location>
        <position position="52"/>
    </location>
</feature>
<feature type="sequence conflict" description="In Ref. 1; AAD02882 and 5; AAM64696." evidence="6" ref="1 5">
    <original>A</original>
    <variation>S</variation>
    <location>
        <position position="175"/>
    </location>
</feature>
<feature type="sequence conflict" description="In Ref. 5; AAM64696." evidence="6" ref="5">
    <original>Q</original>
    <variation>K</variation>
    <location>
        <position position="188"/>
    </location>
</feature>
<proteinExistence type="evidence at protein level"/>
<keyword id="KW-0007">Acetylation</keyword>
<keyword id="KW-0150">Chloroplast</keyword>
<keyword id="KW-0489">Methyltransferase</keyword>
<keyword id="KW-0934">Plastid</keyword>
<keyword id="KW-1185">Reference proteome</keyword>
<keyword id="KW-0949">S-adenosyl-L-methionine</keyword>
<keyword id="KW-0808">Transferase</keyword>
<keyword id="KW-0809">Transit peptide</keyword>
<evidence type="ECO:0000250" key="1"/>
<evidence type="ECO:0000255" key="2">
    <source>
        <dbReference type="PROSITE-ProRule" id="PRU00914"/>
    </source>
</evidence>
<evidence type="ECO:0000269" key="3">
    <source>
    </source>
</evidence>
<evidence type="ECO:0000269" key="4">
    <source>
    </source>
</evidence>
<evidence type="ECO:0000269" key="5">
    <source>
    </source>
</evidence>
<evidence type="ECO:0000305" key="6"/>
<evidence type="ECO:0007744" key="7">
    <source>
    </source>
</evidence>
<accession>Q9ZSK1</accession>
<accession>Q9XIP9</accession>
<organism>
    <name type="scientific">Arabidopsis thaliana</name>
    <name type="common">Mouse-ear cress</name>
    <dbReference type="NCBI Taxonomy" id="3702"/>
    <lineage>
        <taxon>Eukaryota</taxon>
        <taxon>Viridiplantae</taxon>
        <taxon>Streptophyta</taxon>
        <taxon>Embryophyta</taxon>
        <taxon>Tracheophyta</taxon>
        <taxon>Spermatophyta</taxon>
        <taxon>Magnoliopsida</taxon>
        <taxon>eudicotyledons</taxon>
        <taxon>Gunneridae</taxon>
        <taxon>Pentapetalae</taxon>
        <taxon>rosids</taxon>
        <taxon>malvids</taxon>
        <taxon>Brassicales</taxon>
        <taxon>Brassicaceae</taxon>
        <taxon>Camelineae</taxon>
        <taxon>Arabidopsis</taxon>
    </lineage>
</organism>